<accession>P20179</accession>
<organismHost>
    <name type="scientific">Glycine max</name>
    <name type="common">Soybean</name>
    <name type="synonym">Glycine hispida</name>
    <dbReference type="NCBI Taxonomy" id="3847"/>
</organismHost>
<organismHost>
    <name type="scientific">Vigna unguiculata</name>
    <name type="common">Cowpea</name>
    <dbReference type="NCBI Taxonomy" id="3917"/>
</organismHost>
<organism>
    <name type="scientific">Cowpea chlorotic mottle virus</name>
    <name type="common">CCMV</name>
    <dbReference type="NCBI Taxonomy" id="12303"/>
    <lineage>
        <taxon>Viruses</taxon>
        <taxon>Riboviria</taxon>
        <taxon>Orthornavirae</taxon>
        <taxon>Kitrinoviricota</taxon>
        <taxon>Alsuviricetes</taxon>
        <taxon>Martellivirales</taxon>
        <taxon>Bromoviridae</taxon>
        <taxon>Bromovirus</taxon>
    </lineage>
</organism>
<evidence type="ECO:0000250" key="1"/>
<evidence type="ECO:0000255" key="2">
    <source>
        <dbReference type="PROSITE-ProRule" id="PRU00539"/>
    </source>
</evidence>
<evidence type="ECO:0000305" key="3"/>
<dbReference type="EC" id="2.7.7.48"/>
<dbReference type="EMBL" id="M28817">
    <property type="protein sequence ID" value="AAA46371.1"/>
    <property type="molecule type" value="Genomic_RNA"/>
</dbReference>
<dbReference type="PIR" id="JU0117">
    <property type="entry name" value="P2WMCC"/>
</dbReference>
<dbReference type="RefSeq" id="NP_613275.1">
    <property type="nucleotide sequence ID" value="NC_003541.1"/>
</dbReference>
<dbReference type="KEGG" id="vg:962150"/>
<dbReference type="OrthoDB" id="1928at10239"/>
<dbReference type="Proteomes" id="UP000008445">
    <property type="component" value="Genome"/>
</dbReference>
<dbReference type="GO" id="GO:0000166">
    <property type="term" value="F:nucleotide binding"/>
    <property type="evidence" value="ECO:0007669"/>
    <property type="project" value="UniProtKB-KW"/>
</dbReference>
<dbReference type="GO" id="GO:0003723">
    <property type="term" value="F:RNA binding"/>
    <property type="evidence" value="ECO:0007669"/>
    <property type="project" value="InterPro"/>
</dbReference>
<dbReference type="GO" id="GO:0003968">
    <property type="term" value="F:RNA-directed RNA polymerase activity"/>
    <property type="evidence" value="ECO:0007669"/>
    <property type="project" value="UniProtKB-KW"/>
</dbReference>
<dbReference type="GO" id="GO:0006351">
    <property type="term" value="P:DNA-templated transcription"/>
    <property type="evidence" value="ECO:0007669"/>
    <property type="project" value="InterPro"/>
</dbReference>
<dbReference type="GO" id="GO:0039690">
    <property type="term" value="P:positive stranded viral RNA replication"/>
    <property type="evidence" value="ECO:0007669"/>
    <property type="project" value="InterPro"/>
</dbReference>
<dbReference type="CDD" id="cd23252">
    <property type="entry name" value="Bromoviridae_RdRp"/>
    <property type="match status" value="1"/>
</dbReference>
<dbReference type="InterPro" id="IPR007610">
    <property type="entry name" value="BBMV_Gp1_N"/>
</dbReference>
<dbReference type="InterPro" id="IPR047309">
    <property type="entry name" value="Bromoviridae_RdRp"/>
</dbReference>
<dbReference type="InterPro" id="IPR043502">
    <property type="entry name" value="DNA/RNA_pol_sf"/>
</dbReference>
<dbReference type="InterPro" id="IPR001788">
    <property type="entry name" value="RNA-dep_RNA_pol_alsuvir"/>
</dbReference>
<dbReference type="InterPro" id="IPR007094">
    <property type="entry name" value="RNA-dir_pol_PSvirus"/>
</dbReference>
<dbReference type="Pfam" id="PF04522">
    <property type="entry name" value="BBMV_Gp1_N"/>
    <property type="match status" value="1"/>
</dbReference>
<dbReference type="Pfam" id="PF00978">
    <property type="entry name" value="RdRP_2"/>
    <property type="match status" value="1"/>
</dbReference>
<dbReference type="SUPFAM" id="SSF56672">
    <property type="entry name" value="DNA/RNA polymerases"/>
    <property type="match status" value="1"/>
</dbReference>
<dbReference type="PROSITE" id="PS50507">
    <property type="entry name" value="RDRP_SSRNA_POS"/>
    <property type="match status" value="1"/>
</dbReference>
<gene>
    <name type="ORF">ORF2a</name>
</gene>
<reference key="1">
    <citation type="journal article" date="1989" name="Virology">
        <title>Sequence of cowpea chlorotic mottle virus RNAs 2 and 3 and evidence of a recombination event during bromovirus evolution.</title>
        <authorList>
            <person name="Allison R.F."/>
            <person name="Janda M."/>
            <person name="Ahlquist P."/>
        </authorList>
    </citation>
    <scope>NUCLEOTIDE SEQUENCE [GENOMIC RNA]</scope>
</reference>
<proteinExistence type="inferred from homology"/>
<sequence>MSKFIPEGETYHVPSFQWMFDQTLESDSHHDEAIFVTESINESGVDTSVEITADGTLASYMHAVKPLVEDGLLNPPFDQARWGLCCKNVVDVYDGLLGYRLIPMAEAARMLYLEIDGSFVDESECDDWRPVDTSDGFTEAMFDVMNEIPGEETKNTCALSLEAESRQAPETSDMVPSEYTLADRYVTTREEFASVDSDYDISLNLVSPVEFRVGVCEDTYRHSEADDPTMPQYHDRISLKSLEAAGHHMLPTHAYFDDTYYQALEELGDYNVDISKLSVRQSDVDWYRDPEKYYEPELSIGSFQRRIGTQKTVLTALKKRNADVPELADSVDIKRVACEVAEKFKRAYLNHSGIGLLGQSMDVMSRGLEYHKKWKDHKDLTGVTVLSEINLQRYQHMIKSDIKPVVSDTLHLERAVAATITFHGKGVTSCFSPYFTACFEKFSKALKSRFVVPIGKISSLELKNVPLSNKWFLEADLSKFDKSQGELHLEFQREILLSLGFPAPLTNWWCDFHRESMLSDPHAGVNMPVSFQRRTGDAFTYFGNTLVTMAMMAYCCDMNTVDCAIFSGDDSLLICKSKPHLDANVFQSLFNMEIKVMDPSLPYVCSKFLLETEMNNLVSVPDPMREIQRLAKRKIIKSPELLRAHFESFCDRMKFLNKLDEKMINLLCKFVALKYKKPDVENDVRVAIAAFGYYSENFLRFCECYATEGVNIYKVKHPITQEWFEASRDRDGDWFHDWRNPKFPTALDKVWRFFGKYARDDPMKHIEERDRRHRLNRAMNSSLKLAYDRRSLSKDKETVAWVRKTLSK</sequence>
<comment type="function">
    <text evidence="3">RNA-dependent RNA polymerase which replicates the viral genome composed of 3 RNA segments, RNA1, RNA2 and RNA3.</text>
</comment>
<comment type="catalytic activity">
    <reaction evidence="2">
        <text>RNA(n) + a ribonucleoside 5'-triphosphate = RNA(n+1) + diphosphate</text>
        <dbReference type="Rhea" id="RHEA:21248"/>
        <dbReference type="Rhea" id="RHEA-COMP:14527"/>
        <dbReference type="Rhea" id="RHEA-COMP:17342"/>
        <dbReference type="ChEBI" id="CHEBI:33019"/>
        <dbReference type="ChEBI" id="CHEBI:61557"/>
        <dbReference type="ChEBI" id="CHEBI:140395"/>
        <dbReference type="EC" id="2.7.7.48"/>
    </reaction>
</comment>
<comment type="subunit">
    <text evidence="1">Interacts with replication protein 1a.</text>
</comment>
<comment type="similarity">
    <text evidence="3">Belongs to the ssRNA positive-strand viruses RNA-directed RNA polymerase family.</text>
</comment>
<name>RDRP_CCMV</name>
<keyword id="KW-0547">Nucleotide-binding</keyword>
<keyword id="KW-0548">Nucleotidyltransferase</keyword>
<keyword id="KW-0696">RNA-directed RNA polymerase</keyword>
<keyword id="KW-0808">Transferase</keyword>
<keyword id="KW-0693">Viral RNA replication</keyword>
<feature type="chain" id="PRO_0000083270" description="RNA-directed RNA polymerase 2a">
    <location>
        <begin position="1"/>
        <end position="808"/>
    </location>
</feature>
<feature type="domain" description="RdRp catalytic" evidence="2">
    <location>
        <begin position="470"/>
        <end position="583"/>
    </location>
</feature>
<protein>
    <recommendedName>
        <fullName>RNA-directed RNA polymerase 2a</fullName>
        <shortName>protein 2a</shortName>
        <ecNumber>2.7.7.48</ecNumber>
    </recommendedName>
</protein>